<protein>
    <recommendedName>
        <fullName evidence="6">Antimicrobial peptide defensin 3</fullName>
        <shortName evidence="4">AgDef3</shortName>
    </recommendedName>
</protein>
<name>DEF3_ANOGA</name>
<feature type="signal peptide" evidence="1">
    <location>
        <begin position="1"/>
        <end position="22"/>
    </location>
</feature>
<feature type="chain" id="PRO_0000398808" description="Antimicrobial peptide defensin 3" evidence="1">
    <location>
        <begin position="23"/>
        <end position="67"/>
    </location>
</feature>
<feature type="disulfide bond" evidence="2">
    <location>
        <begin position="29"/>
        <end position="56"/>
    </location>
</feature>
<feature type="disulfide bond" evidence="2">
    <location>
        <begin position="42"/>
        <end position="62"/>
    </location>
</feature>
<feature type="disulfide bond" evidence="2">
    <location>
        <begin position="46"/>
        <end position="64"/>
    </location>
</feature>
<feature type="sequence conflict" description="In Ref. 1; AAX92637." evidence="5" ref="1">
    <original>T</original>
    <variation>A</variation>
    <location>
        <position position="67"/>
    </location>
</feature>
<organism>
    <name type="scientific">Anopheles gambiae</name>
    <name type="common">African malaria mosquito</name>
    <dbReference type="NCBI Taxonomy" id="7165"/>
    <lineage>
        <taxon>Eukaryota</taxon>
        <taxon>Metazoa</taxon>
        <taxon>Ecdysozoa</taxon>
        <taxon>Arthropoda</taxon>
        <taxon>Hexapoda</taxon>
        <taxon>Insecta</taxon>
        <taxon>Pterygota</taxon>
        <taxon>Neoptera</taxon>
        <taxon>Endopterygota</taxon>
        <taxon>Diptera</taxon>
        <taxon>Nematocera</taxon>
        <taxon>Culicoidea</taxon>
        <taxon>Culicidae</taxon>
        <taxon>Anophelinae</taxon>
        <taxon>Anopheles</taxon>
    </lineage>
</organism>
<proteinExistence type="evidence at transcript level"/>
<reference evidence="5 6" key="1">
    <citation type="journal article" date="2008" name="Insect Mol. Biol.">
        <title>The malaria vector mosquito Anopheles gambiae expresses a suite of larval-specific defensin genes.</title>
        <authorList>
            <person name="Meredith J.M."/>
            <person name="Hurd H."/>
            <person name="Lehane M.J."/>
            <person name="Eggleston P."/>
        </authorList>
    </citation>
    <scope>NUCLEOTIDE SEQUENCE [MRNA]</scope>
    <scope>FUNCTION</scope>
    <scope>DEVELOPMENTAL STAGE</scope>
    <scope>INDUCTION</scope>
    <source>
        <strain evidence="6">Keele</strain>
        <tissue evidence="3">Larva</tissue>
    </source>
</reference>
<reference evidence="7" key="2">
    <citation type="journal article" date="2002" name="Science">
        <title>The genome sequence of the malaria mosquito Anopheles gambiae.</title>
        <authorList>
            <person name="Holt R.A."/>
            <person name="Subramanian G.M."/>
            <person name="Halpern A."/>
            <person name="Sutton G.G."/>
            <person name="Charlab R."/>
            <person name="Nusskern D.R."/>
            <person name="Wincker P."/>
            <person name="Clark A.G."/>
            <person name="Ribeiro J.M.C."/>
            <person name="Wides R."/>
            <person name="Salzberg S.L."/>
            <person name="Loftus B.J."/>
            <person name="Yandell M.D."/>
            <person name="Majoros W.H."/>
            <person name="Rusch D.B."/>
            <person name="Lai Z."/>
            <person name="Kraft C.L."/>
            <person name="Abril J.F."/>
            <person name="Anthouard V."/>
            <person name="Arensburger P."/>
            <person name="Atkinson P.W."/>
            <person name="Baden H."/>
            <person name="de Berardinis V."/>
            <person name="Baldwin D."/>
            <person name="Benes V."/>
            <person name="Biedler J."/>
            <person name="Blass C."/>
            <person name="Bolanos R."/>
            <person name="Boscus D."/>
            <person name="Barnstead M."/>
            <person name="Cai S."/>
            <person name="Center A."/>
            <person name="Chaturverdi K."/>
            <person name="Christophides G.K."/>
            <person name="Chrystal M.A.M."/>
            <person name="Clamp M."/>
            <person name="Cravchik A."/>
            <person name="Curwen V."/>
            <person name="Dana A."/>
            <person name="Delcher A."/>
            <person name="Dew I."/>
            <person name="Evans C.A."/>
            <person name="Flanigan M."/>
            <person name="Grundschober-Freimoser A."/>
            <person name="Friedli L."/>
            <person name="Gu Z."/>
            <person name="Guan P."/>
            <person name="Guigo R."/>
            <person name="Hillenmeyer M.E."/>
            <person name="Hladun S.L."/>
            <person name="Hogan J.R."/>
            <person name="Hong Y.S."/>
            <person name="Hoover J."/>
            <person name="Jaillon O."/>
            <person name="Ke Z."/>
            <person name="Kodira C.D."/>
            <person name="Kokoza E."/>
            <person name="Koutsos A."/>
            <person name="Letunic I."/>
            <person name="Levitsky A.A."/>
            <person name="Liang Y."/>
            <person name="Lin J.-J."/>
            <person name="Lobo N.F."/>
            <person name="Lopez J.R."/>
            <person name="Malek J.A."/>
            <person name="McIntosh T.C."/>
            <person name="Meister S."/>
            <person name="Miller J.R."/>
            <person name="Mobarry C."/>
            <person name="Mongin E."/>
            <person name="Murphy S.D."/>
            <person name="O'Brochta D.A."/>
            <person name="Pfannkoch C."/>
            <person name="Qi R."/>
            <person name="Regier M.A."/>
            <person name="Remington K."/>
            <person name="Shao H."/>
            <person name="Sharakhova M.V."/>
            <person name="Sitter C.D."/>
            <person name="Shetty J."/>
            <person name="Smith T.J."/>
            <person name="Strong R."/>
            <person name="Sun J."/>
            <person name="Thomasova D."/>
            <person name="Ton L.Q."/>
            <person name="Topalis P."/>
            <person name="Tu Z.J."/>
            <person name="Unger M.F."/>
            <person name="Walenz B."/>
            <person name="Wang A.H."/>
            <person name="Wang J."/>
            <person name="Wang M."/>
            <person name="Wang X."/>
            <person name="Woodford K.J."/>
            <person name="Wortman J.R."/>
            <person name="Wu M."/>
            <person name="Yao A."/>
            <person name="Zdobnov E.M."/>
            <person name="Zhang H."/>
            <person name="Zhao Q."/>
            <person name="Zhao S."/>
            <person name="Zhu S.C."/>
            <person name="Zhimulev I."/>
            <person name="Coluzzi M."/>
            <person name="della Torre A."/>
            <person name="Roth C.W."/>
            <person name="Louis C."/>
            <person name="Kalush F."/>
            <person name="Mural R.J."/>
            <person name="Myers E.W."/>
            <person name="Adams M.D."/>
            <person name="Smith H.O."/>
            <person name="Broder S."/>
            <person name="Gardner M.J."/>
            <person name="Fraser C.M."/>
            <person name="Birney E."/>
            <person name="Bork P."/>
            <person name="Brey P.T."/>
            <person name="Venter J.C."/>
            <person name="Weissenbach J."/>
            <person name="Kafatos F.C."/>
            <person name="Collins F.H."/>
            <person name="Hoffman S.L."/>
        </authorList>
    </citation>
    <scope>NUCLEOTIDE SEQUENCE [LARGE SCALE GENOMIC DNA]</scope>
    <source>
        <strain>PEST</strain>
    </source>
</reference>
<reference evidence="5" key="3">
    <citation type="journal article" date="2006" name="Insect Biochem. Mol. Biol.">
        <title>The sialotranscriptome of adult male Anopheles gambiae mosquitoes.</title>
        <authorList>
            <person name="Calvo E."/>
            <person name="Pham V.M."/>
            <person name="Lombardo F."/>
            <person name="Arca B."/>
            <person name="Ribeiro J.M."/>
        </authorList>
    </citation>
    <scope>IDENTIFICATION</scope>
</reference>
<keyword id="KW-0044">Antibiotic</keyword>
<keyword id="KW-0929">Antimicrobial</keyword>
<keyword id="KW-0211">Defensin</keyword>
<keyword id="KW-1015">Disulfide bond</keyword>
<keyword id="KW-1185">Reference proteome</keyword>
<keyword id="KW-0964">Secreted</keyword>
<keyword id="KW-0732">Signal</keyword>
<comment type="function">
    <text evidence="2 3">Antibacterial peptide mostly active against Gram-positive bacteria with atypical up-regulation of expression.</text>
</comment>
<comment type="subcellular location">
    <subcellularLocation>
        <location evidence="2">Secreted</location>
    </subcellularLocation>
</comment>
<comment type="developmental stage">
    <text evidence="3">Basal levels of expression during all life stages, with higher levels during larval development peaking at larval instars 2/3.</text>
</comment>
<comment type="induction">
    <text evidence="3">Not induced in 4th instar larvae following a blood meal, an infected blood meal, sterile injection or bacterial injection (E.coli K12 RM148 and M.luteus).</text>
</comment>
<comment type="similarity">
    <text evidence="2">Belongs to the invertebrate defensin family.</text>
</comment>
<sequence length="67" mass="6954">MKFAVVSFLLVALLGLVAVGEAQLKNLACVTNEGPKWANTYCAAVCHMSGRGAGSCNAKDECVCSMT</sequence>
<dbReference type="EMBL" id="AY907825">
    <property type="protein sequence ID" value="AAX92637.1"/>
    <property type="molecule type" value="mRNA"/>
</dbReference>
<dbReference type="EMBL" id="AAAB01008807">
    <property type="protein sequence ID" value="EAL41851.2"/>
    <property type="molecule type" value="Genomic_DNA"/>
</dbReference>
<dbReference type="RefSeq" id="XP_565009.2">
    <property type="nucleotide sequence ID" value="XM_565009.2"/>
</dbReference>
<dbReference type="SMR" id="Q5TWR9"/>
<dbReference type="STRING" id="7165.Q5TWR9"/>
<dbReference type="PaxDb" id="7165-AGAP007199-PA"/>
<dbReference type="EnsemblMetazoa" id="AGAP007199-RA">
    <property type="protein sequence ID" value="AGAP007199-PA"/>
    <property type="gene ID" value="AGAP007199"/>
</dbReference>
<dbReference type="GeneID" id="3290326"/>
<dbReference type="KEGG" id="aga:3290326"/>
<dbReference type="VEuPathDB" id="VectorBase:AGAMI1_000780"/>
<dbReference type="VEuPathDB" id="VectorBase:AGAP007199"/>
<dbReference type="HOGENOM" id="CLU_2814504_0_0_1"/>
<dbReference type="InParanoid" id="Q5TWR9"/>
<dbReference type="OMA" id="WANTYCA"/>
<dbReference type="Proteomes" id="UP000007062">
    <property type="component" value="Chromosome 2L"/>
</dbReference>
<dbReference type="GO" id="GO:0005615">
    <property type="term" value="C:extracellular space"/>
    <property type="evidence" value="ECO:0000314"/>
    <property type="project" value="UniProtKB"/>
</dbReference>
<dbReference type="GO" id="GO:0042742">
    <property type="term" value="P:defense response to bacterium"/>
    <property type="evidence" value="ECO:0000315"/>
    <property type="project" value="UniProtKB"/>
</dbReference>
<dbReference type="InterPro" id="IPR001542">
    <property type="entry name" value="Defensin_invertebrate/fungal"/>
</dbReference>
<dbReference type="PROSITE" id="PS51378">
    <property type="entry name" value="INVERT_DEFENSINS"/>
    <property type="match status" value="1"/>
</dbReference>
<gene>
    <name evidence="7" type="primary">Def3</name>
    <name type="ORF">AGAP007199</name>
</gene>
<accession>Q5TWR9</accession>
<accession>Q2KM07</accession>
<evidence type="ECO:0000255" key="1"/>
<evidence type="ECO:0000255" key="2">
    <source>
        <dbReference type="PROSITE-ProRule" id="PRU00710"/>
    </source>
</evidence>
<evidence type="ECO:0000269" key="3">
    <source>
    </source>
</evidence>
<evidence type="ECO:0000303" key="4">
    <source>
    </source>
</evidence>
<evidence type="ECO:0000305" key="5"/>
<evidence type="ECO:0000312" key="6">
    <source>
        <dbReference type="EMBL" id="AAX92637.1"/>
    </source>
</evidence>
<evidence type="ECO:0000312" key="7">
    <source>
        <dbReference type="EMBL" id="EAL41851.2"/>
    </source>
</evidence>